<name>AROA_COXBU</name>
<proteinExistence type="evidence at protein level"/>
<accession>Q83E11</accession>
<sequence length="438" mass="46432">MDYQTIPSQGLSGEICVPGDKSISHRAVLLAAIAEGQTQVDGFLMGADNLAMVSALQQMGASIQVIEDENILVVEGVGMTGLQAPPEALDCGNSGTAIRLLSGLLAGQPFNTVLTGDSSLQRRPMKRIIDPLTLMGAKIDSTGNVPPLKIYGNPRLTGIHYQLPMASAQVKSCLLLAGLYARGKTCITEPAPSRDHTERLLKHFHYTLQKDKQSICVSGGGKLKANDISIPGDISSAAFFIVAATITPGSAIRLCRVGVNPTRLGVINLLKMMGADIEVTHYTEKNEEPTADITVRHARLKGIDIPPDQVPLTIDEFPVLLIAAAVAQGKTVLRDAAELRVKETDRIAAMVDGLQKLGIAAESLPDGVIIQGGTLEGGEVNSYDDHRIAMAFAVAGTLAKGPVRIRNCDNVKTSFPNFVELANEVGMNVKGVRGRGGF</sequence>
<dbReference type="EC" id="2.5.1.19" evidence="1"/>
<dbReference type="EMBL" id="AE016828">
    <property type="protein sequence ID" value="AAO90072.1"/>
    <property type="molecule type" value="Genomic_DNA"/>
</dbReference>
<dbReference type="RefSeq" id="NP_819558.1">
    <property type="nucleotide sequence ID" value="NC_002971.4"/>
</dbReference>
<dbReference type="RefSeq" id="WP_010957637.1">
    <property type="nucleotide sequence ID" value="NC_002971.4"/>
</dbReference>
<dbReference type="PDB" id="3ROI">
    <property type="method" value="X-ray"/>
    <property type="resolution" value="2.20 A"/>
    <property type="chains" value="A/B=1-438"/>
</dbReference>
<dbReference type="PDB" id="3SLH">
    <property type="method" value="X-ray"/>
    <property type="resolution" value="1.70 A"/>
    <property type="chains" value="A/B/C/D=1-438"/>
</dbReference>
<dbReference type="PDB" id="3TR1">
    <property type="method" value="X-ray"/>
    <property type="resolution" value="2.00 A"/>
    <property type="chains" value="A=1-438"/>
</dbReference>
<dbReference type="PDB" id="4EGR">
    <property type="method" value="X-ray"/>
    <property type="resolution" value="2.50 A"/>
    <property type="chains" value="A/B/C/D/E/F=1-438"/>
</dbReference>
<dbReference type="PDB" id="4GFP">
    <property type="method" value="X-ray"/>
    <property type="resolution" value="2.70 A"/>
    <property type="chains" value="A=1-438"/>
</dbReference>
<dbReference type="PDB" id="4ZND">
    <property type="method" value="X-ray"/>
    <property type="resolution" value="2.55 A"/>
    <property type="chains" value="A=1-438"/>
</dbReference>
<dbReference type="PDBsum" id="3ROI"/>
<dbReference type="PDBsum" id="3SLH"/>
<dbReference type="PDBsum" id="3TR1"/>
<dbReference type="PDBsum" id="4EGR"/>
<dbReference type="PDBsum" id="4GFP"/>
<dbReference type="PDBsum" id="4ZND"/>
<dbReference type="SMR" id="Q83E11"/>
<dbReference type="STRING" id="227377.CBU_0526"/>
<dbReference type="EnsemblBacteria" id="AAO90072">
    <property type="protein sequence ID" value="AAO90072"/>
    <property type="gene ID" value="CBU_0526"/>
</dbReference>
<dbReference type="GeneID" id="1208411"/>
<dbReference type="KEGG" id="cbu:CBU_0526"/>
<dbReference type="PATRIC" id="fig|227377.7.peg.521"/>
<dbReference type="eggNOG" id="COG0128">
    <property type="taxonomic scope" value="Bacteria"/>
</dbReference>
<dbReference type="HOGENOM" id="CLU_024321_0_1_6"/>
<dbReference type="OrthoDB" id="9809920at2"/>
<dbReference type="BRENDA" id="2.5.1.19">
    <property type="organism ID" value="1677"/>
</dbReference>
<dbReference type="UniPathway" id="UPA00053">
    <property type="reaction ID" value="UER00089"/>
</dbReference>
<dbReference type="EvolutionaryTrace" id="Q83E11"/>
<dbReference type="Proteomes" id="UP000002671">
    <property type="component" value="Chromosome"/>
</dbReference>
<dbReference type="GO" id="GO:0005737">
    <property type="term" value="C:cytoplasm"/>
    <property type="evidence" value="ECO:0007669"/>
    <property type="project" value="UniProtKB-SubCell"/>
</dbReference>
<dbReference type="GO" id="GO:0003866">
    <property type="term" value="F:3-phosphoshikimate 1-carboxyvinyltransferase activity"/>
    <property type="evidence" value="ECO:0000250"/>
    <property type="project" value="UniProtKB"/>
</dbReference>
<dbReference type="GO" id="GO:0008652">
    <property type="term" value="P:amino acid biosynthetic process"/>
    <property type="evidence" value="ECO:0007669"/>
    <property type="project" value="UniProtKB-KW"/>
</dbReference>
<dbReference type="GO" id="GO:0009073">
    <property type="term" value="P:aromatic amino acid family biosynthetic process"/>
    <property type="evidence" value="ECO:0007669"/>
    <property type="project" value="UniProtKB-KW"/>
</dbReference>
<dbReference type="GO" id="GO:0009423">
    <property type="term" value="P:chorismate biosynthetic process"/>
    <property type="evidence" value="ECO:0000318"/>
    <property type="project" value="GO_Central"/>
</dbReference>
<dbReference type="CDD" id="cd01556">
    <property type="entry name" value="EPSP_synthase"/>
    <property type="match status" value="1"/>
</dbReference>
<dbReference type="FunFam" id="3.65.10.10:FF:000005">
    <property type="entry name" value="3-phosphoshikimate 1-carboxyvinyltransferase"/>
    <property type="match status" value="1"/>
</dbReference>
<dbReference type="FunFam" id="3.65.10.10:FF:000006">
    <property type="entry name" value="3-phosphoshikimate 1-carboxyvinyltransferase"/>
    <property type="match status" value="1"/>
</dbReference>
<dbReference type="Gene3D" id="3.65.10.10">
    <property type="entry name" value="Enolpyruvate transferase domain"/>
    <property type="match status" value="2"/>
</dbReference>
<dbReference type="HAMAP" id="MF_00210">
    <property type="entry name" value="EPSP_synth"/>
    <property type="match status" value="1"/>
</dbReference>
<dbReference type="InterPro" id="IPR001986">
    <property type="entry name" value="Enolpyruvate_Tfrase_dom"/>
</dbReference>
<dbReference type="InterPro" id="IPR036968">
    <property type="entry name" value="Enolpyruvate_Tfrase_sf"/>
</dbReference>
<dbReference type="InterPro" id="IPR006264">
    <property type="entry name" value="EPSP_synthase"/>
</dbReference>
<dbReference type="InterPro" id="IPR023193">
    <property type="entry name" value="EPSP_synthase_CS"/>
</dbReference>
<dbReference type="InterPro" id="IPR013792">
    <property type="entry name" value="RNA3'P_cycl/enolpyr_Trfase_a/b"/>
</dbReference>
<dbReference type="NCBIfam" id="TIGR01356">
    <property type="entry name" value="aroA"/>
    <property type="match status" value="1"/>
</dbReference>
<dbReference type="PANTHER" id="PTHR21090">
    <property type="entry name" value="AROM/DEHYDROQUINATE SYNTHASE"/>
    <property type="match status" value="1"/>
</dbReference>
<dbReference type="PANTHER" id="PTHR21090:SF5">
    <property type="entry name" value="PENTAFUNCTIONAL AROM POLYPEPTIDE"/>
    <property type="match status" value="1"/>
</dbReference>
<dbReference type="Pfam" id="PF00275">
    <property type="entry name" value="EPSP_synthase"/>
    <property type="match status" value="1"/>
</dbReference>
<dbReference type="PIRSF" id="PIRSF000505">
    <property type="entry name" value="EPSPS"/>
    <property type="match status" value="1"/>
</dbReference>
<dbReference type="SUPFAM" id="SSF55205">
    <property type="entry name" value="EPT/RTPC-like"/>
    <property type="match status" value="1"/>
</dbReference>
<dbReference type="PROSITE" id="PS00104">
    <property type="entry name" value="EPSP_SYNTHASE_1"/>
    <property type="match status" value="1"/>
</dbReference>
<dbReference type="PROSITE" id="PS00885">
    <property type="entry name" value="EPSP_SYNTHASE_2"/>
    <property type="match status" value="1"/>
</dbReference>
<gene>
    <name evidence="1" type="primary">aroA</name>
    <name type="ordered locus">CBU_0526</name>
</gene>
<keyword id="KW-0002">3D-structure</keyword>
<keyword id="KW-0028">Amino-acid biosynthesis</keyword>
<keyword id="KW-0057">Aromatic amino acid biosynthesis</keyword>
<keyword id="KW-0963">Cytoplasm</keyword>
<keyword id="KW-1185">Reference proteome</keyword>
<keyword id="KW-0808">Transferase</keyword>
<evidence type="ECO:0000255" key="1">
    <source>
        <dbReference type="HAMAP-Rule" id="MF_00210"/>
    </source>
</evidence>
<evidence type="ECO:0000269" key="2">
    <source ref="2"/>
</evidence>
<evidence type="ECO:0000269" key="3">
    <source ref="3"/>
</evidence>
<evidence type="ECO:0000269" key="4">
    <source ref="4"/>
</evidence>
<evidence type="ECO:0000269" key="5">
    <source ref="7"/>
</evidence>
<evidence type="ECO:0007744" key="6">
    <source>
        <dbReference type="PDB" id="3ROI"/>
    </source>
</evidence>
<evidence type="ECO:0007744" key="7">
    <source>
        <dbReference type="PDB" id="3SLH"/>
    </source>
</evidence>
<evidence type="ECO:0007744" key="8">
    <source>
        <dbReference type="PDB" id="3TR1"/>
    </source>
</evidence>
<evidence type="ECO:0007744" key="9">
    <source>
        <dbReference type="PDB" id="4EGR"/>
    </source>
</evidence>
<evidence type="ECO:0007744" key="10">
    <source>
        <dbReference type="PDB" id="4GFP"/>
    </source>
</evidence>
<evidence type="ECO:0007744" key="11">
    <source>
        <dbReference type="PDB" id="4ZND"/>
    </source>
</evidence>
<evidence type="ECO:0007829" key="12">
    <source>
        <dbReference type="PDB" id="3SLH"/>
    </source>
</evidence>
<evidence type="ECO:0007829" key="13">
    <source>
        <dbReference type="PDB" id="3TR1"/>
    </source>
</evidence>
<organism>
    <name type="scientific">Coxiella burnetii (strain RSA 493 / Nine Mile phase I)</name>
    <dbReference type="NCBI Taxonomy" id="227377"/>
    <lineage>
        <taxon>Bacteria</taxon>
        <taxon>Pseudomonadati</taxon>
        <taxon>Pseudomonadota</taxon>
        <taxon>Gammaproteobacteria</taxon>
        <taxon>Legionellales</taxon>
        <taxon>Coxiellaceae</taxon>
        <taxon>Coxiella</taxon>
    </lineage>
</organism>
<reference key="1">
    <citation type="journal article" date="2003" name="Proc. Natl. Acad. Sci. U.S.A.">
        <title>Complete genome sequence of the Q-fever pathogen, Coxiella burnetii.</title>
        <authorList>
            <person name="Seshadri R."/>
            <person name="Paulsen I.T."/>
            <person name="Eisen J.A."/>
            <person name="Read T.D."/>
            <person name="Nelson K.E."/>
            <person name="Nelson W.C."/>
            <person name="Ward N.L."/>
            <person name="Tettelin H."/>
            <person name="Davidsen T.M."/>
            <person name="Beanan M.J."/>
            <person name="DeBoy R.T."/>
            <person name="Daugherty S.C."/>
            <person name="Brinkac L.M."/>
            <person name="Madupu R."/>
            <person name="Dodson R.J."/>
            <person name="Khouri H.M."/>
            <person name="Lee K.H."/>
            <person name="Carty H.A."/>
            <person name="Scanlan D."/>
            <person name="Heinzen R.A."/>
            <person name="Thompson H.A."/>
            <person name="Samuel J.E."/>
            <person name="Fraser C.M."/>
            <person name="Heidelberg J.F."/>
        </authorList>
    </citation>
    <scope>NUCLEOTIDE SEQUENCE [LARGE SCALE GENOMIC DNA]</scope>
    <source>
        <strain>RSA 493 / Nine Mile phase I</strain>
    </source>
</reference>
<reference evidence="6" key="2">
    <citation type="submission" date="2011-04" db="PDB data bank">
        <title>2.20 Angstrom resolution structure of 3-phosphoshikimate 1-carboxyvinyltransferase (AroA) from Coxiella burnetii.</title>
        <authorList>
            <consortium name="Center for Structural Genomics of Infectious Diseases (CSGID)"/>
            <person name="Light S.H."/>
            <person name="Minasov G."/>
            <person name="Krishna S.N."/>
            <person name="Halavaty A.S."/>
            <person name="Shuvalova L."/>
            <person name="Papazisi L."/>
            <person name="Anderson W.F."/>
        </authorList>
    </citation>
    <scope>X-RAY CRYSTALLOGRAPHY (2.20 ANGSTROMS)</scope>
    <scope>SUBUNIT</scope>
</reference>
<reference evidence="7" key="3">
    <citation type="submission" date="2011-06" db="PDB data bank">
        <title>1.70 Angstrom resolution structure of 3-phosphoshikimate 1-carboxyvinyltransferase(AroA) from Coxiella burnetii in complex with shikimate-3-phosphate and glyphosate.</title>
        <authorList>
            <consortium name="Center for Structural Genomics of Infectious Diseases (CSGID)"/>
            <person name="Light S.H."/>
            <person name="Minasov G."/>
            <person name="Filippova E.V."/>
            <person name="Krishna S.N."/>
            <person name="Shuvalova L."/>
            <person name="Papazisi L."/>
            <person name="Anderson W.F."/>
        </authorList>
    </citation>
    <scope>X-RAY CRYSTALLOGRAPHY (1.70 ANGSTROMS) IN COMPLEX WITH 3-PHOSPHOSHIKIMATE AND GLYPHOSATE</scope>
    <scope>SUBUNIT</scope>
</reference>
<reference evidence="9" key="4">
    <citation type="submission" date="2012-03" db="PDB data bank">
        <title>2.50 angstrom resolution structure of 3-phosphoshikimate 1-carboxyvinyltransferase (AroA) from Coxiella burnetii in complex with phosphoenolpyruvate.</title>
        <authorList>
            <person name="Krishna S.N."/>
            <person name="Light S.H."/>
            <person name="Minasov G."/>
            <person name="Shuvalova L."/>
            <person name="Kwon K."/>
            <person name="Anderson W.F."/>
        </authorList>
    </citation>
    <scope>X-RAY CRYSTALLOGRAPHY (2.50 ANGSTROMS) IN COMPLEX WITH PHOSPHOENOLPYRUVATE</scope>
    <scope>SUBUNIT</scope>
</reference>
<reference evidence="10" key="5">
    <citation type="submission" date="2012-08" db="PDB data bank">
        <title>2.7 Angstrom resolution structure of 3-phosphoshikimate 1-carboxyvinyltransferase (AroA) from Coxiella burnetii in second conformational state.</title>
        <authorList>
            <person name="Light S.H."/>
            <person name="Minasov G."/>
            <person name="Krishna S.N."/>
            <person name="Shuvalova L."/>
            <person name="Papazisi L."/>
            <person name="Anderson W.F."/>
        </authorList>
    </citation>
    <scope>X-RAY CRYSTALLOGRAPHY (2.70 ANGSTROMS)</scope>
</reference>
<reference evidence="8" key="6">
    <citation type="journal article" date="2015" name="Proteins">
        <title>Structural genomics for drug design against the pathogen Coxiella burnetii.</title>
        <authorList>
            <person name="Franklin M.C."/>
            <person name="Cheung J."/>
            <person name="Rudolph M.J."/>
            <person name="Burshteyn F."/>
            <person name="Cassidy M."/>
            <person name="Gary E."/>
            <person name="Hillerich B."/>
            <person name="Yao Z.K."/>
            <person name="Carlier P.R."/>
            <person name="Totrov M."/>
            <person name="Love J.D."/>
        </authorList>
    </citation>
    <scope>X-RAY CRYSTALLOGRAPHY (2.00 ANGSTROMS)</scope>
</reference>
<reference evidence="11" key="7">
    <citation type="submission" date="2015-05" db="PDB data bank">
        <title>2.55 Angstrom resolution structure of 3-phosphoshikimate 1-carboxyvinyltransferase (AroA) from Coxiella burnetii in complex with shikimate-3-phosphate, phosphate, and potassium.</title>
        <authorList>
            <person name="Light S.H."/>
            <person name="Minasov G."/>
            <person name="Krishna S.N."/>
            <person name="Kwon K."/>
            <person name="Anderson W.F."/>
        </authorList>
    </citation>
    <scope>X-RAY CRYSTALLOGRAPHY (2.55 ANGSTROMS) IN COMPLEX WITH 3-PHOSPHOSHIKIMATE</scope>
</reference>
<feature type="chain" id="PRO_1000071737" description="3-phosphoshikimate 1-carboxyvinyltransferase">
    <location>
        <begin position="1"/>
        <end position="438"/>
    </location>
</feature>
<feature type="region of interest" description="Phosphoenolpyruvate" evidence="1 3 4">
    <location>
        <begin position="93"/>
        <end position="96"/>
    </location>
</feature>
<feature type="active site" description="Proton acceptor" evidence="1">
    <location>
        <position position="315"/>
    </location>
</feature>
<feature type="binding site" evidence="4 9">
    <location>
        <position position="21"/>
    </location>
    <ligand>
        <name>phosphoenolpyruvate</name>
        <dbReference type="ChEBI" id="CHEBI:58702"/>
    </ligand>
</feature>
<feature type="binding site" evidence="3 5 7 11">
    <location>
        <position position="22"/>
    </location>
    <ligand>
        <name>3-phosphoshikimate</name>
        <dbReference type="ChEBI" id="CHEBI:145989"/>
    </ligand>
</feature>
<feature type="binding site" evidence="3 5 7 11">
    <location>
        <position position="26"/>
    </location>
    <ligand>
        <name>3-phosphoshikimate</name>
        <dbReference type="ChEBI" id="CHEBI:145989"/>
    </ligand>
</feature>
<feature type="binding site" evidence="4 9">
    <location>
        <position position="95"/>
    </location>
    <ligand>
        <name>phosphoenolpyruvate</name>
        <dbReference type="ChEBI" id="CHEBI:58702"/>
    </ligand>
</feature>
<feature type="binding site" evidence="4 9">
    <location>
        <position position="96"/>
    </location>
    <ligand>
        <name>phosphoenolpyruvate</name>
        <dbReference type="ChEBI" id="CHEBI:58702"/>
    </ligand>
</feature>
<feature type="binding site" evidence="4 9">
    <location>
        <position position="123"/>
    </location>
    <ligand>
        <name>phosphoenolpyruvate</name>
        <dbReference type="ChEBI" id="CHEBI:58702"/>
    </ligand>
</feature>
<feature type="binding site" evidence="3 5 7 11">
    <location>
        <position position="167"/>
    </location>
    <ligand>
        <name>3-phosphoshikimate</name>
        <dbReference type="ChEBI" id="CHEBI:145989"/>
    </ligand>
</feature>
<feature type="binding site" evidence="3 5 7 11">
    <location>
        <position position="168"/>
    </location>
    <ligand>
        <name>3-phosphoshikimate</name>
        <dbReference type="ChEBI" id="CHEBI:145989"/>
    </ligand>
</feature>
<feature type="binding site" evidence="3 5 7 11">
    <location>
        <position position="169"/>
    </location>
    <ligand>
        <name>3-phosphoshikimate</name>
        <dbReference type="ChEBI" id="CHEBI:145989"/>
    </ligand>
</feature>
<feature type="binding site" evidence="4 9">
    <location>
        <position position="169"/>
    </location>
    <ligand>
        <name>phosphoenolpyruvate</name>
        <dbReference type="ChEBI" id="CHEBI:58702"/>
    </ligand>
</feature>
<feature type="binding site" evidence="3 5 7 11">
    <location>
        <position position="315"/>
    </location>
    <ligand>
        <name>3-phosphoshikimate</name>
        <dbReference type="ChEBI" id="CHEBI:145989"/>
    </ligand>
</feature>
<feature type="binding site" evidence="3 5 7 11">
    <location>
        <position position="342"/>
    </location>
    <ligand>
        <name>3-phosphoshikimate</name>
        <dbReference type="ChEBI" id="CHEBI:145989"/>
    </ligand>
</feature>
<feature type="binding site" evidence="4 9">
    <location>
        <position position="346"/>
    </location>
    <ligand>
        <name>phosphoenolpyruvate</name>
        <dbReference type="ChEBI" id="CHEBI:58702"/>
    </ligand>
</feature>
<feature type="binding site" evidence="4 9">
    <location>
        <position position="387"/>
    </location>
    <ligand>
        <name>phosphoenolpyruvate</name>
        <dbReference type="ChEBI" id="CHEBI:58702"/>
    </ligand>
</feature>
<feature type="strand" evidence="12">
    <location>
        <begin position="1"/>
        <end position="5"/>
    </location>
</feature>
<feature type="strand" evidence="12">
    <location>
        <begin position="12"/>
        <end position="16"/>
    </location>
</feature>
<feature type="helix" evidence="12">
    <location>
        <begin position="21"/>
        <end position="33"/>
    </location>
</feature>
<feature type="strand" evidence="12">
    <location>
        <begin position="34"/>
        <end position="42"/>
    </location>
</feature>
<feature type="helix" evidence="12">
    <location>
        <begin position="47"/>
        <end position="58"/>
    </location>
</feature>
<feature type="strand" evidence="12">
    <location>
        <begin position="62"/>
        <end position="66"/>
    </location>
</feature>
<feature type="helix" evidence="12">
    <location>
        <begin position="67"/>
        <end position="69"/>
    </location>
</feature>
<feature type="strand" evidence="12">
    <location>
        <begin position="71"/>
        <end position="75"/>
    </location>
</feature>
<feature type="helix" evidence="12">
    <location>
        <begin position="95"/>
        <end position="105"/>
    </location>
</feature>
<feature type="strand" evidence="12">
    <location>
        <begin position="108"/>
        <end position="115"/>
    </location>
</feature>
<feature type="helix" evidence="12">
    <location>
        <begin position="120"/>
        <end position="122"/>
    </location>
</feature>
<feature type="helix" evidence="12">
    <location>
        <begin position="126"/>
        <end position="134"/>
    </location>
</feature>
<feature type="strand" evidence="12">
    <location>
        <begin position="138"/>
        <end position="142"/>
    </location>
</feature>
<feature type="strand" evidence="12">
    <location>
        <begin position="145"/>
        <end position="151"/>
    </location>
</feature>
<feature type="strand" evidence="12">
    <location>
        <begin position="160"/>
        <end position="162"/>
    </location>
</feature>
<feature type="strand" evidence="13">
    <location>
        <begin position="164"/>
        <end position="166"/>
    </location>
</feature>
<feature type="helix" evidence="12">
    <location>
        <begin position="168"/>
        <end position="178"/>
    </location>
</feature>
<feature type="strand" evidence="12">
    <location>
        <begin position="181"/>
        <end position="188"/>
    </location>
</feature>
<feature type="helix" evidence="12">
    <location>
        <begin position="196"/>
        <end position="203"/>
    </location>
</feature>
<feature type="strand" evidence="12">
    <location>
        <begin position="215"/>
        <end position="218"/>
    </location>
</feature>
<feature type="helix" evidence="12">
    <location>
        <begin position="234"/>
        <end position="246"/>
    </location>
</feature>
<feature type="strand" evidence="12">
    <location>
        <begin position="251"/>
        <end position="258"/>
    </location>
</feature>
<feature type="helix" evidence="12">
    <location>
        <begin position="261"/>
        <end position="263"/>
    </location>
</feature>
<feature type="helix" evidence="12">
    <location>
        <begin position="265"/>
        <end position="273"/>
    </location>
</feature>
<feature type="strand" evidence="12">
    <location>
        <begin position="276"/>
        <end position="285"/>
    </location>
</feature>
<feature type="strand" evidence="12">
    <location>
        <begin position="288"/>
        <end position="296"/>
    </location>
</feature>
<feature type="helix" evidence="12">
    <location>
        <begin position="307"/>
        <end position="309"/>
    </location>
</feature>
<feature type="helix" evidence="12">
    <location>
        <begin position="310"/>
        <end position="313"/>
    </location>
</feature>
<feature type="helix" evidence="12">
    <location>
        <begin position="314"/>
        <end position="316"/>
    </location>
</feature>
<feature type="helix" evidence="12">
    <location>
        <begin position="317"/>
        <end position="325"/>
    </location>
</feature>
<feature type="strand" evidence="12">
    <location>
        <begin position="327"/>
        <end position="333"/>
    </location>
</feature>
<feature type="helix" evidence="12">
    <location>
        <begin position="337"/>
        <end position="341"/>
    </location>
</feature>
<feature type="strand" evidence="12">
    <location>
        <begin position="342"/>
        <end position="344"/>
    </location>
</feature>
<feature type="helix" evidence="12">
    <location>
        <begin position="346"/>
        <end position="356"/>
    </location>
</feature>
<feature type="strand" evidence="12">
    <location>
        <begin position="360"/>
        <end position="364"/>
    </location>
</feature>
<feature type="strand" evidence="12">
    <location>
        <begin position="367"/>
        <end position="371"/>
    </location>
</feature>
<feature type="strand" evidence="12">
    <location>
        <begin position="378"/>
        <end position="381"/>
    </location>
</feature>
<feature type="helix" evidence="12">
    <location>
        <begin position="386"/>
        <end position="398"/>
    </location>
</feature>
<feature type="strand" evidence="13">
    <location>
        <begin position="399"/>
        <end position="401"/>
    </location>
</feature>
<feature type="strand" evidence="12">
    <location>
        <begin position="403"/>
        <end position="406"/>
    </location>
</feature>
<feature type="helix" evidence="12">
    <location>
        <begin position="409"/>
        <end position="413"/>
    </location>
</feature>
<feature type="helix" evidence="12">
    <location>
        <begin position="418"/>
        <end position="425"/>
    </location>
</feature>
<feature type="strand" evidence="12">
    <location>
        <begin position="429"/>
        <end position="433"/>
    </location>
</feature>
<protein>
    <recommendedName>
        <fullName evidence="1">3-phosphoshikimate 1-carboxyvinyltransferase</fullName>
        <ecNumber evidence="1">2.5.1.19</ecNumber>
    </recommendedName>
    <alternativeName>
        <fullName evidence="1">5-enolpyruvylshikimate-3-phosphate synthase</fullName>
        <shortName evidence="1">EPSP synthase</shortName>
        <shortName evidence="1">EPSPS</shortName>
    </alternativeName>
</protein>
<comment type="function">
    <text evidence="1">Catalyzes the transfer of the enolpyruvyl moiety of phosphoenolpyruvate (PEP) to the 5-hydroxyl of shikimate-3-phosphate (S3P) to produce enolpyruvyl shikimate-3-phosphate and inorganic phosphate.</text>
</comment>
<comment type="catalytic activity">
    <reaction evidence="1">
        <text>3-phosphoshikimate + phosphoenolpyruvate = 5-O-(1-carboxyvinyl)-3-phosphoshikimate + phosphate</text>
        <dbReference type="Rhea" id="RHEA:21256"/>
        <dbReference type="ChEBI" id="CHEBI:43474"/>
        <dbReference type="ChEBI" id="CHEBI:57701"/>
        <dbReference type="ChEBI" id="CHEBI:58702"/>
        <dbReference type="ChEBI" id="CHEBI:145989"/>
        <dbReference type="EC" id="2.5.1.19"/>
    </reaction>
    <physiologicalReaction direction="left-to-right" evidence="1">
        <dbReference type="Rhea" id="RHEA:21257"/>
    </physiologicalReaction>
</comment>
<comment type="pathway">
    <text evidence="1">Metabolic intermediate biosynthesis; chorismate biosynthesis; chorismate from D-erythrose 4-phosphate and phosphoenolpyruvate: step 6/7.</text>
</comment>
<comment type="subunit">
    <text evidence="2 3 4">Homodimer or homotetramer.</text>
</comment>
<comment type="subcellular location">
    <subcellularLocation>
        <location evidence="1">Cytoplasm</location>
    </subcellularLocation>
</comment>
<comment type="similarity">
    <text evidence="1">Belongs to the EPSP synthase family.</text>
</comment>